<protein>
    <recommendedName>
        <fullName evidence="1">Large ribosomal subunit protein bL19</fullName>
    </recommendedName>
    <alternativeName>
        <fullName evidence="2">50S ribosomal protein L19</fullName>
    </alternativeName>
</protein>
<reference key="1">
    <citation type="journal article" date="2005" name="Nat. Biotechnol.">
        <title>The genome sequence of the ethanologenic bacterium Zymomonas mobilis ZM4.</title>
        <authorList>
            <person name="Seo J.-S."/>
            <person name="Chong H."/>
            <person name="Park H.S."/>
            <person name="Yoon K.-O."/>
            <person name="Jung C."/>
            <person name="Kim J.J."/>
            <person name="Hong J.H."/>
            <person name="Kim H."/>
            <person name="Kim J.-H."/>
            <person name="Kil J.-I."/>
            <person name="Park C.J."/>
            <person name="Oh H.-M."/>
            <person name="Lee J.-S."/>
            <person name="Jin S.-J."/>
            <person name="Um H.-W."/>
            <person name="Lee H.-J."/>
            <person name="Oh S.-J."/>
            <person name="Kim J.Y."/>
            <person name="Kang H.L."/>
            <person name="Lee S.Y."/>
            <person name="Lee K.J."/>
            <person name="Kang H.S."/>
        </authorList>
    </citation>
    <scope>NUCLEOTIDE SEQUENCE [LARGE SCALE GENOMIC DNA]</scope>
    <source>
        <strain>ATCC 31821 / ZM4 / CP4</strain>
    </source>
</reference>
<accession>Q5NNK7</accession>
<proteinExistence type="inferred from homology"/>
<name>RL19_ZYMMO</name>
<gene>
    <name evidence="1" type="primary">rplS</name>
    <name type="ordered locus">ZMO1079</name>
</gene>
<keyword id="KW-1185">Reference proteome</keyword>
<keyword id="KW-0687">Ribonucleoprotein</keyword>
<keyword id="KW-0689">Ribosomal protein</keyword>
<feature type="chain" id="PRO_0000163578" description="Large ribosomal subunit protein bL19">
    <location>
        <begin position="1"/>
        <end position="124"/>
    </location>
</feature>
<dbReference type="EMBL" id="AE008692">
    <property type="protein sequence ID" value="AAV89703.1"/>
    <property type="molecule type" value="Genomic_DNA"/>
</dbReference>
<dbReference type="RefSeq" id="WP_011240914.1">
    <property type="nucleotide sequence ID" value="NZ_CP035711.1"/>
</dbReference>
<dbReference type="SMR" id="Q5NNK7"/>
<dbReference type="STRING" id="264203.ZMO1079"/>
<dbReference type="GeneID" id="79903790"/>
<dbReference type="KEGG" id="zmo:ZMO1079"/>
<dbReference type="eggNOG" id="COG0335">
    <property type="taxonomic scope" value="Bacteria"/>
</dbReference>
<dbReference type="HOGENOM" id="CLU_103507_2_1_5"/>
<dbReference type="Proteomes" id="UP000001173">
    <property type="component" value="Chromosome"/>
</dbReference>
<dbReference type="GO" id="GO:0022625">
    <property type="term" value="C:cytosolic large ribosomal subunit"/>
    <property type="evidence" value="ECO:0007669"/>
    <property type="project" value="TreeGrafter"/>
</dbReference>
<dbReference type="GO" id="GO:0003735">
    <property type="term" value="F:structural constituent of ribosome"/>
    <property type="evidence" value="ECO:0007669"/>
    <property type="project" value="InterPro"/>
</dbReference>
<dbReference type="GO" id="GO:0006412">
    <property type="term" value="P:translation"/>
    <property type="evidence" value="ECO:0007669"/>
    <property type="project" value="UniProtKB-UniRule"/>
</dbReference>
<dbReference type="FunFam" id="2.30.30.790:FF:000001">
    <property type="entry name" value="50S ribosomal protein L19"/>
    <property type="match status" value="1"/>
</dbReference>
<dbReference type="Gene3D" id="2.30.30.790">
    <property type="match status" value="1"/>
</dbReference>
<dbReference type="HAMAP" id="MF_00402">
    <property type="entry name" value="Ribosomal_bL19"/>
    <property type="match status" value="1"/>
</dbReference>
<dbReference type="InterPro" id="IPR001857">
    <property type="entry name" value="Ribosomal_bL19"/>
</dbReference>
<dbReference type="InterPro" id="IPR018257">
    <property type="entry name" value="Ribosomal_bL19_CS"/>
</dbReference>
<dbReference type="InterPro" id="IPR038657">
    <property type="entry name" value="Ribosomal_bL19_sf"/>
</dbReference>
<dbReference type="InterPro" id="IPR008991">
    <property type="entry name" value="Translation_prot_SH3-like_sf"/>
</dbReference>
<dbReference type="NCBIfam" id="TIGR01024">
    <property type="entry name" value="rplS_bact"/>
    <property type="match status" value="1"/>
</dbReference>
<dbReference type="PANTHER" id="PTHR15680:SF9">
    <property type="entry name" value="LARGE RIBOSOMAL SUBUNIT PROTEIN BL19M"/>
    <property type="match status" value="1"/>
</dbReference>
<dbReference type="PANTHER" id="PTHR15680">
    <property type="entry name" value="RIBOSOMAL PROTEIN L19"/>
    <property type="match status" value="1"/>
</dbReference>
<dbReference type="Pfam" id="PF01245">
    <property type="entry name" value="Ribosomal_L19"/>
    <property type="match status" value="1"/>
</dbReference>
<dbReference type="PIRSF" id="PIRSF002191">
    <property type="entry name" value="Ribosomal_L19"/>
    <property type="match status" value="1"/>
</dbReference>
<dbReference type="PRINTS" id="PR00061">
    <property type="entry name" value="RIBOSOMALL19"/>
</dbReference>
<dbReference type="SUPFAM" id="SSF50104">
    <property type="entry name" value="Translation proteins SH3-like domain"/>
    <property type="match status" value="1"/>
</dbReference>
<dbReference type="PROSITE" id="PS01015">
    <property type="entry name" value="RIBOSOMAL_L19"/>
    <property type="match status" value="1"/>
</dbReference>
<organism>
    <name type="scientific">Zymomonas mobilis subsp. mobilis (strain ATCC 31821 / ZM4 / CP4)</name>
    <dbReference type="NCBI Taxonomy" id="264203"/>
    <lineage>
        <taxon>Bacteria</taxon>
        <taxon>Pseudomonadati</taxon>
        <taxon>Pseudomonadota</taxon>
        <taxon>Alphaproteobacteria</taxon>
        <taxon>Sphingomonadales</taxon>
        <taxon>Zymomonadaceae</taxon>
        <taxon>Zymomonas</taxon>
    </lineage>
</organism>
<sequence>MNLIQTLEAEQIAKLQEQKSIPDFRAGDTLKVGVRVVEGERIRIQFYEGVCIARSNKAIGSSFTVRKISFGEGVERVFPLYSPNVDSIEVVRRGVVRRAKLYYLRGRRGKAARIAERRDVRPSK</sequence>
<comment type="function">
    <text evidence="1">This protein is located at the 30S-50S ribosomal subunit interface and may play a role in the structure and function of the aminoacyl-tRNA binding site.</text>
</comment>
<comment type="similarity">
    <text evidence="1">Belongs to the bacterial ribosomal protein bL19 family.</text>
</comment>
<evidence type="ECO:0000255" key="1">
    <source>
        <dbReference type="HAMAP-Rule" id="MF_00402"/>
    </source>
</evidence>
<evidence type="ECO:0000305" key="2"/>